<feature type="chain" id="PRO_0000202974" description="U3 small nucleolar RNA-associated protein 25">
    <location>
        <begin position="1"/>
        <end position="721"/>
    </location>
</feature>
<feature type="region of interest" description="Disordered" evidence="1">
    <location>
        <begin position="1"/>
        <end position="168"/>
    </location>
</feature>
<feature type="compositionally biased region" description="Basic and acidic residues" evidence="1">
    <location>
        <begin position="1"/>
        <end position="14"/>
    </location>
</feature>
<feature type="compositionally biased region" description="Basic residues" evidence="1">
    <location>
        <begin position="15"/>
        <end position="31"/>
    </location>
</feature>
<feature type="compositionally biased region" description="Acidic residues" evidence="1">
    <location>
        <begin position="55"/>
        <end position="72"/>
    </location>
</feature>
<feature type="compositionally biased region" description="Basic and acidic residues" evidence="1">
    <location>
        <begin position="88"/>
        <end position="105"/>
    </location>
</feature>
<feature type="compositionally biased region" description="Acidic residues" evidence="1">
    <location>
        <begin position="140"/>
        <end position="161"/>
    </location>
</feature>
<feature type="modified residue" description="Phosphoserine" evidence="8">
    <location>
        <position position="53"/>
    </location>
</feature>
<feature type="modified residue" description="Phosphoserine" evidence="8">
    <location>
        <position position="63"/>
    </location>
</feature>
<feature type="modified residue" description="Phosphoserine" evidence="7">
    <location>
        <position position="196"/>
    </location>
</feature>
<proteinExistence type="evidence at protein level"/>
<accession>P40498</accession>
<accession>D6VVJ6</accession>
<sequence length="721" mass="83991">MSDSSVREKNDNFRGYRKRGRQELRKIKRSSARTEGGSTETLEDVAEDIDHRSDEDEVSDVDSGDDFDIEDEEGKKEKVYDALLTILKSEHPEPKRRRREADESNKAPAEVGEDEHENTEHGPVDDQLEIENGLLGNHEDDNDDDSSGDEKDIDSEDEQDPFESHFNQVPEKFVDKLSNAFKTKSVKYKSVKGSLSDSESYIYAKPVVIGEEALVESPYRSSSIYSYFLKQRLKVQNGLLDKKTDPLTALQKKLVDPMFQYKDILYEYDSYEKDEDEYRDLYALHVLNHIYKTRDRILKNNQRLQDNPDTEHLDQGFTRPKVLIVVPTREVAYRVVDKIISKSGIDQVDKKGKFYDQFRDDSLPPKSKPKSFQHIFRGNTNDFFVVGLKFTRKAIKLYSNFYQSDIIVCSPLGIQMILENTDKKKRQDDFLSSIELMVIDQLHSIEYQNISHIFTIFDHLNKIPDQQHEADFSRIRMWYINEQAKLFRQTMVFTKYISPAANSLINGRCRNMAGRWKNHKVIGSENSSIGQSGLKIRQIFQRFDIIGNSIIEEPDYRFKFFTSVIIPGIVKSTGYEDGILIYIPDYTDFIRIRNYMKEKTTILFGDINEYSSQRQLNANRSLFQQGRLKVMLYTERLHHYRRYEIKGVKSVVFYKPPNNPEFYNEVVRFIGKNAFLGNTDLNISTVRCIYSKLDGLSLERIVGTKRAAVLSHAQKEIYEFK</sequence>
<evidence type="ECO:0000256" key="1">
    <source>
        <dbReference type="SAM" id="MobiDB-lite"/>
    </source>
</evidence>
<evidence type="ECO:0000269" key="2">
    <source>
    </source>
</evidence>
<evidence type="ECO:0000269" key="3">
    <source>
    </source>
</evidence>
<evidence type="ECO:0000269" key="4">
    <source>
    </source>
</evidence>
<evidence type="ECO:0000269" key="5">
    <source>
    </source>
</evidence>
<evidence type="ECO:0000305" key="6"/>
<evidence type="ECO:0007744" key="7">
    <source>
    </source>
</evidence>
<evidence type="ECO:0007744" key="8">
    <source>
    </source>
</evidence>
<organism>
    <name type="scientific">Saccharomyces cerevisiae (strain ATCC 204508 / S288c)</name>
    <name type="common">Baker's yeast</name>
    <dbReference type="NCBI Taxonomy" id="559292"/>
    <lineage>
        <taxon>Eukaryota</taxon>
        <taxon>Fungi</taxon>
        <taxon>Dikarya</taxon>
        <taxon>Ascomycota</taxon>
        <taxon>Saccharomycotina</taxon>
        <taxon>Saccharomycetes</taxon>
        <taxon>Saccharomycetales</taxon>
        <taxon>Saccharomycetaceae</taxon>
        <taxon>Saccharomyces</taxon>
    </lineage>
</organism>
<comment type="function">
    <text evidence="4 5">DEAD-box RNA helicase-like protein required for pre-18S rRNA processing, specifically at sites A0, A1, and A2.</text>
</comment>
<comment type="subunit">
    <text evidence="4 5">Interacts with snoRNA U3. Interacts with MPP10, NOP19, RRP9, UTP8 and UTP18. Component of the ribosomal small subunit (SSU) processome composed of at least 40 protein subunits and snoRNA U3.</text>
</comment>
<comment type="interaction">
    <interactant intactId="EBI-25113">
        <id>P40498</id>
    </interactant>
    <interactant intactId="EBI-5844">
        <id>P36009</id>
        <label>DHR2</label>
    </interactant>
    <organismsDiffer>false</organismsDiffer>
    <experiments>2</experiments>
</comment>
<comment type="interaction">
    <interactant intactId="EBI-25113">
        <id>P40498</id>
    </interactant>
    <interactant intactId="EBI-11168">
        <id>P47083</id>
        <label>MPP10</label>
    </interactant>
    <organismsDiffer>false</organismsDiffer>
    <experiments>7</experiments>
</comment>
<comment type="interaction">
    <interactant intactId="EBI-25113">
        <id>P40498</id>
    </interactant>
    <interactant intactId="EBI-31770">
        <id>Q12481</id>
        <label>RRP36</label>
    </interactant>
    <organismsDiffer>false</organismsDiffer>
    <experiments>2</experiments>
</comment>
<comment type="interaction">
    <interactant intactId="EBI-25113">
        <id>P40498</id>
    </interactant>
    <interactant intactId="EBI-36084">
        <id>Q12136</id>
        <label>SAS10</label>
    </interactant>
    <organismsDiffer>false</organismsDiffer>
    <experiments>8</experiments>
</comment>
<comment type="interaction">
    <interactant intactId="EBI-25113">
        <id>P40498</id>
    </interactant>
    <interactant intactId="EBI-359">
        <id>Q06078</id>
        <label>UTP21</label>
    </interactant>
    <organismsDiffer>false</organismsDiffer>
    <experiments>3</experiments>
</comment>
<comment type="interaction">
    <interactant intactId="EBI-25113">
        <id>P40498</id>
    </interactant>
    <interactant intactId="EBI-1878">
        <id>P53254</id>
        <label>UTP22</label>
    </interactant>
    <organismsDiffer>false</organismsDiffer>
    <experiments>3</experiments>
</comment>
<comment type="subcellular location">
    <subcellularLocation>
        <location evidence="2">Nucleus</location>
        <location evidence="2">Nucleolus</location>
    </subcellularLocation>
</comment>
<comment type="miscellaneous">
    <text evidence="3">Present with 172 molecules/cell in log phase SD medium.</text>
</comment>
<comment type="similarity">
    <text evidence="6">Belongs to the UTP25 family.</text>
</comment>
<name>UTP25_YEAST</name>
<protein>
    <recommendedName>
        <fullName>U3 small nucleolar RNA-associated protein 25</fullName>
        <shortName>U3 snoRNA-associated protein 25</shortName>
    </recommendedName>
    <alternativeName>
        <fullName>U three protein 25</fullName>
    </alternativeName>
</protein>
<keyword id="KW-0539">Nucleus</keyword>
<keyword id="KW-0597">Phosphoprotein</keyword>
<keyword id="KW-1185">Reference proteome</keyword>
<keyword id="KW-0687">Ribonucleoprotein</keyword>
<keyword id="KW-0690">Ribosome biogenesis</keyword>
<keyword id="KW-0698">rRNA processing</keyword>
<gene>
    <name type="primary">UTP25</name>
    <name type="ordered locus">YIL091C</name>
</gene>
<reference key="1">
    <citation type="journal article" date="1997" name="Nature">
        <title>The nucleotide sequence of Saccharomyces cerevisiae chromosome IX.</title>
        <authorList>
            <person name="Churcher C.M."/>
            <person name="Bowman S."/>
            <person name="Badcock K."/>
            <person name="Bankier A.T."/>
            <person name="Brown D."/>
            <person name="Chillingworth T."/>
            <person name="Connor R."/>
            <person name="Devlin K."/>
            <person name="Gentles S."/>
            <person name="Hamlin N."/>
            <person name="Harris D.E."/>
            <person name="Horsnell T."/>
            <person name="Hunt S."/>
            <person name="Jagels K."/>
            <person name="Jones M."/>
            <person name="Lye G."/>
            <person name="Moule S."/>
            <person name="Odell C."/>
            <person name="Pearson D."/>
            <person name="Rajandream M.A."/>
            <person name="Rice P."/>
            <person name="Rowley N."/>
            <person name="Skelton J."/>
            <person name="Smith V."/>
            <person name="Walsh S.V."/>
            <person name="Whitehead S."/>
            <person name="Barrell B.G."/>
        </authorList>
    </citation>
    <scope>NUCLEOTIDE SEQUENCE [LARGE SCALE GENOMIC DNA]</scope>
    <source>
        <strain>ATCC 204508 / S288c</strain>
    </source>
</reference>
<reference key="2">
    <citation type="journal article" date="2014" name="G3 (Bethesda)">
        <title>The reference genome sequence of Saccharomyces cerevisiae: Then and now.</title>
        <authorList>
            <person name="Engel S.R."/>
            <person name="Dietrich F.S."/>
            <person name="Fisk D.G."/>
            <person name="Binkley G."/>
            <person name="Balakrishnan R."/>
            <person name="Costanzo M.C."/>
            <person name="Dwight S.S."/>
            <person name="Hitz B.C."/>
            <person name="Karra K."/>
            <person name="Nash R.S."/>
            <person name="Weng S."/>
            <person name="Wong E.D."/>
            <person name="Lloyd P."/>
            <person name="Skrzypek M.S."/>
            <person name="Miyasato S.R."/>
            <person name="Simison M."/>
            <person name="Cherry J.M."/>
        </authorList>
    </citation>
    <scope>GENOME REANNOTATION</scope>
    <source>
        <strain>ATCC 204508 / S288c</strain>
    </source>
</reference>
<reference key="3">
    <citation type="journal article" date="2003" name="Nature">
        <title>Global analysis of protein localization in budding yeast.</title>
        <authorList>
            <person name="Huh W.-K."/>
            <person name="Falvo J.V."/>
            <person name="Gerke L.C."/>
            <person name="Carroll A.S."/>
            <person name="Howson R.W."/>
            <person name="Weissman J.S."/>
            <person name="O'Shea E.K."/>
        </authorList>
    </citation>
    <scope>SUBCELLULAR LOCATION [LARGE SCALE ANALYSIS]</scope>
</reference>
<reference key="4">
    <citation type="journal article" date="2003" name="Nature">
        <title>Global analysis of protein expression in yeast.</title>
        <authorList>
            <person name="Ghaemmaghami S."/>
            <person name="Huh W.-K."/>
            <person name="Bower K."/>
            <person name="Howson R.W."/>
            <person name="Belle A."/>
            <person name="Dephoure N."/>
            <person name="O'Shea E.K."/>
            <person name="Weissman J.S."/>
        </authorList>
    </citation>
    <scope>LEVEL OF PROTEIN EXPRESSION [LARGE SCALE ANALYSIS]</scope>
</reference>
<reference key="5">
    <citation type="journal article" date="2008" name="Mol. Cell. Proteomics">
        <title>A multidimensional chromatography technology for in-depth phosphoproteome analysis.</title>
        <authorList>
            <person name="Albuquerque C.P."/>
            <person name="Smolka M.B."/>
            <person name="Payne S.H."/>
            <person name="Bafna V."/>
            <person name="Eng J."/>
            <person name="Zhou H."/>
        </authorList>
    </citation>
    <scope>PHOSPHORYLATION [LARGE SCALE ANALYSIS] AT SER-196</scope>
    <scope>IDENTIFICATION BY MASS SPECTROMETRY [LARGE SCALE ANALYSIS]</scope>
</reference>
<reference key="6">
    <citation type="journal article" date="2009" name="Science">
        <title>Global analysis of Cdk1 substrate phosphorylation sites provides insights into evolution.</title>
        <authorList>
            <person name="Holt L.J."/>
            <person name="Tuch B.B."/>
            <person name="Villen J."/>
            <person name="Johnson A.D."/>
            <person name="Gygi S.P."/>
            <person name="Morgan D.O."/>
        </authorList>
    </citation>
    <scope>PHOSPHORYLATION [LARGE SCALE ANALYSIS] AT SER-53 AND SER-63</scope>
    <scope>IDENTIFICATION BY MASS SPECTROMETRY [LARGE SCALE ANALYSIS]</scope>
</reference>
<reference key="7">
    <citation type="journal article" date="2010" name="RNA">
        <title>The DEAD-box RNA helicase-like Utp25 is an SSU processome component.</title>
        <authorList>
            <person name="Charette J.M."/>
            <person name="Baserga S.J."/>
        </authorList>
    </citation>
    <scope>IDENTIFICATION IN THE SSU PROCESSOME</scope>
    <scope>FUNCTION</scope>
    <scope>INTERACTION WITH U3 SNORNA; MMP10; RRP9; UTP8 AND UTP18</scope>
</reference>
<reference key="8">
    <citation type="journal article" date="2011" name="RNA Biol.">
        <title>The nucleolar protein Nop19p interacts preferentially with Utp25p and Dhr2p and is essential for the production of the 40S ribosomal subunit in Saccharomyces cerevisiae.</title>
        <authorList>
            <person name="Choque E."/>
            <person name="Marcellin M."/>
            <person name="Burlet-Schiltz O."/>
            <person name="Gadal O."/>
            <person name="Dez C."/>
        </authorList>
    </citation>
    <scope>INTERACTION WITH NOP19</scope>
    <scope>FUNCTION</scope>
</reference>
<dbReference type="EMBL" id="Z46728">
    <property type="protein sequence ID" value="CAA86703.1"/>
    <property type="molecule type" value="Genomic_DNA"/>
</dbReference>
<dbReference type="EMBL" id="BK006942">
    <property type="protein sequence ID" value="DAA08462.1"/>
    <property type="molecule type" value="Genomic_DNA"/>
</dbReference>
<dbReference type="PIR" id="S49789">
    <property type="entry name" value="S49789"/>
</dbReference>
<dbReference type="RefSeq" id="NP_012175.1">
    <property type="nucleotide sequence ID" value="NM_001179439.1"/>
</dbReference>
<dbReference type="BioGRID" id="34901">
    <property type="interactions" value="186"/>
</dbReference>
<dbReference type="DIP" id="DIP-5629N"/>
<dbReference type="FunCoup" id="P40498">
    <property type="interactions" value="1494"/>
</dbReference>
<dbReference type="IntAct" id="P40498">
    <property type="interactions" value="64"/>
</dbReference>
<dbReference type="MINT" id="P40498"/>
<dbReference type="STRING" id="4932.YIL091C"/>
<dbReference type="iPTMnet" id="P40498"/>
<dbReference type="PaxDb" id="4932-YIL091C"/>
<dbReference type="PeptideAtlas" id="P40498"/>
<dbReference type="EnsemblFungi" id="YIL091C_mRNA">
    <property type="protein sequence ID" value="YIL091C"/>
    <property type="gene ID" value="YIL091C"/>
</dbReference>
<dbReference type="GeneID" id="854717"/>
<dbReference type="KEGG" id="sce:YIL091C"/>
<dbReference type="AGR" id="SGD:S000001353"/>
<dbReference type="SGD" id="S000001353">
    <property type="gene designation" value="UTP25"/>
</dbReference>
<dbReference type="VEuPathDB" id="FungiDB:YIL091C"/>
<dbReference type="eggNOG" id="KOG2340">
    <property type="taxonomic scope" value="Eukaryota"/>
</dbReference>
<dbReference type="GeneTree" id="ENSGT00390000000709"/>
<dbReference type="HOGENOM" id="CLU_018705_0_1_1"/>
<dbReference type="InParanoid" id="P40498"/>
<dbReference type="OMA" id="QDRGDTF"/>
<dbReference type="OrthoDB" id="10264378at2759"/>
<dbReference type="BioCyc" id="YEAST:G3O-31351-MONOMER"/>
<dbReference type="Reactome" id="R-SCE-6791226">
    <property type="pathway name" value="Major pathway of rRNA processing in the nucleolus and cytosol"/>
</dbReference>
<dbReference type="BioGRID-ORCS" id="854717">
    <property type="hits" value="1 hit in 10 CRISPR screens"/>
</dbReference>
<dbReference type="PRO" id="PR:P40498"/>
<dbReference type="Proteomes" id="UP000002311">
    <property type="component" value="Chromosome IX"/>
</dbReference>
<dbReference type="RNAct" id="P40498">
    <property type="molecule type" value="protein"/>
</dbReference>
<dbReference type="GO" id="GO:0005730">
    <property type="term" value="C:nucleolus"/>
    <property type="evidence" value="ECO:0000314"/>
    <property type="project" value="SGD"/>
</dbReference>
<dbReference type="GO" id="GO:0005654">
    <property type="term" value="C:nucleoplasm"/>
    <property type="evidence" value="ECO:0000304"/>
    <property type="project" value="Reactome"/>
</dbReference>
<dbReference type="GO" id="GO:0005634">
    <property type="term" value="C:nucleus"/>
    <property type="evidence" value="ECO:0000314"/>
    <property type="project" value="SGD"/>
</dbReference>
<dbReference type="GO" id="GO:0032040">
    <property type="term" value="C:small-subunit processome"/>
    <property type="evidence" value="ECO:0000314"/>
    <property type="project" value="SGD"/>
</dbReference>
<dbReference type="GO" id="GO:0019843">
    <property type="term" value="F:rRNA binding"/>
    <property type="evidence" value="ECO:0000314"/>
    <property type="project" value="SGD"/>
</dbReference>
<dbReference type="GO" id="GO:0034511">
    <property type="term" value="F:U3 snoRNA binding"/>
    <property type="evidence" value="ECO:0000314"/>
    <property type="project" value="SGD"/>
</dbReference>
<dbReference type="GO" id="GO:0030490">
    <property type="term" value="P:maturation of SSU-rRNA"/>
    <property type="evidence" value="ECO:0000303"/>
    <property type="project" value="ComplexPortal"/>
</dbReference>
<dbReference type="GO" id="GO:0000462">
    <property type="term" value="P:maturation of SSU-rRNA from tricistronic rRNA transcript (SSU-rRNA, 5.8S rRNA, LSU-rRNA)"/>
    <property type="evidence" value="ECO:0000315"/>
    <property type="project" value="SGD"/>
</dbReference>
<dbReference type="GO" id="GO:0042274">
    <property type="term" value="P:ribosomal small subunit biogenesis"/>
    <property type="evidence" value="ECO:0000315"/>
    <property type="project" value="SGD"/>
</dbReference>
<dbReference type="FunFam" id="3.40.50.300:FF:002072">
    <property type="entry name" value="U3 small nucleolar RNA-associated protein 25"/>
    <property type="match status" value="1"/>
</dbReference>
<dbReference type="Gene3D" id="3.40.50.300">
    <property type="entry name" value="P-loop containing nucleotide triphosphate hydrolases"/>
    <property type="match status" value="1"/>
</dbReference>
<dbReference type="InterPro" id="IPR027417">
    <property type="entry name" value="P-loop_NTPase"/>
</dbReference>
<dbReference type="InterPro" id="IPR010678">
    <property type="entry name" value="UTP25"/>
</dbReference>
<dbReference type="InterPro" id="IPR053939">
    <property type="entry name" value="UTP25_C"/>
</dbReference>
<dbReference type="InterPro" id="IPR053940">
    <property type="entry name" value="UTP25_NTPase-like"/>
</dbReference>
<dbReference type="PANTHER" id="PTHR12933">
    <property type="entry name" value="ORF PROTEIN-RELATED"/>
    <property type="match status" value="1"/>
</dbReference>
<dbReference type="PANTHER" id="PTHR12933:SF0">
    <property type="entry name" value="U3 SMALL NUCLEOLAR RNA-ASSOCIATED PROTEIN 25 HOMOLOG"/>
    <property type="match status" value="1"/>
</dbReference>
<dbReference type="Pfam" id="PF06862">
    <property type="entry name" value="Utp25_C"/>
    <property type="match status" value="1"/>
</dbReference>
<dbReference type="Pfam" id="PF22916">
    <property type="entry name" value="UTP25_NTPase-like"/>
    <property type="match status" value="1"/>
</dbReference>
<dbReference type="SUPFAM" id="SSF52540">
    <property type="entry name" value="P-loop containing nucleoside triphosphate hydrolases"/>
    <property type="match status" value="1"/>
</dbReference>